<gene>
    <name type="primary">TIFY3A</name>
    <name type="synonym">JAZ11</name>
    <name type="ordered locus">At3g43440</name>
    <name type="ORF">T18D12.10</name>
</gene>
<organism>
    <name type="scientific">Arabidopsis thaliana</name>
    <name type="common">Mouse-ear cress</name>
    <dbReference type="NCBI Taxonomy" id="3702"/>
    <lineage>
        <taxon>Eukaryota</taxon>
        <taxon>Viridiplantae</taxon>
        <taxon>Streptophyta</taxon>
        <taxon>Embryophyta</taxon>
        <taxon>Tracheophyta</taxon>
        <taxon>Spermatophyta</taxon>
        <taxon>Magnoliopsida</taxon>
        <taxon>eudicotyledons</taxon>
        <taxon>Gunneridae</taxon>
        <taxon>Pentapetalae</taxon>
        <taxon>rosids</taxon>
        <taxon>malvids</taxon>
        <taxon>Brassicales</taxon>
        <taxon>Brassicaceae</taxon>
        <taxon>Camelineae</taxon>
        <taxon>Arabidopsis</taxon>
    </lineage>
</organism>
<name>TIF3A_ARATH</name>
<protein>
    <recommendedName>
        <fullName>Protein TIFY 3A</fullName>
    </recommendedName>
    <alternativeName>
        <fullName>Jasmonate ZIM domain-containing protein 11</fullName>
    </alternativeName>
</protein>
<proteinExistence type="evidence at protein level"/>
<keyword id="KW-0025">Alternative splicing</keyword>
<keyword id="KW-1184">Jasmonic acid signaling pathway</keyword>
<keyword id="KW-0539">Nucleus</keyword>
<keyword id="KW-0611">Plant defense</keyword>
<keyword id="KW-1185">Reference proteome</keyword>
<keyword id="KW-0677">Repeat</keyword>
<keyword id="KW-0804">Transcription</keyword>
<keyword id="KW-0805">Transcription regulation</keyword>
<keyword id="KW-0832">Ubl conjugation</keyword>
<dbReference type="EMBL" id="AL138644">
    <property type="protein sequence ID" value="CAB81784.1"/>
    <property type="molecule type" value="Genomic_DNA"/>
</dbReference>
<dbReference type="EMBL" id="CP002686">
    <property type="protein sequence ID" value="AEE77795.1"/>
    <property type="molecule type" value="Genomic_DNA"/>
</dbReference>
<dbReference type="EMBL" id="BT015154">
    <property type="protein sequence ID" value="AAT85750.1"/>
    <property type="molecule type" value="mRNA"/>
</dbReference>
<dbReference type="EMBL" id="BT015661">
    <property type="protein sequence ID" value="AAU15160.1"/>
    <property type="molecule type" value="mRNA"/>
</dbReference>
<dbReference type="PIR" id="T47386">
    <property type="entry name" value="T47386"/>
</dbReference>
<dbReference type="RefSeq" id="NP_189930.1">
    <molecule id="Q9M246-1"/>
    <property type="nucleotide sequence ID" value="NM_114212.5"/>
</dbReference>
<dbReference type="SMR" id="Q9M246"/>
<dbReference type="BioGRID" id="8748">
    <property type="interactions" value="24"/>
</dbReference>
<dbReference type="DIP" id="DIP-53278N"/>
<dbReference type="FunCoup" id="Q9M246">
    <property type="interactions" value="307"/>
</dbReference>
<dbReference type="IntAct" id="Q9M246">
    <property type="interactions" value="10"/>
</dbReference>
<dbReference type="STRING" id="3702.Q9M246"/>
<dbReference type="iPTMnet" id="Q9M246"/>
<dbReference type="PaxDb" id="3702-AT3G43440.1"/>
<dbReference type="ProteomicsDB" id="234353">
    <molecule id="Q9M246-1"/>
</dbReference>
<dbReference type="DNASU" id="823426"/>
<dbReference type="EnsemblPlants" id="AT3G43440.1">
    <molecule id="Q9M246-1"/>
    <property type="protein sequence ID" value="AT3G43440.1"/>
    <property type="gene ID" value="AT3G43440"/>
</dbReference>
<dbReference type="GeneID" id="823426"/>
<dbReference type="Gramene" id="AT3G43440.1">
    <molecule id="Q9M246-1"/>
    <property type="protein sequence ID" value="AT3G43440.1"/>
    <property type="gene ID" value="AT3G43440"/>
</dbReference>
<dbReference type="KEGG" id="ath:AT3G43440"/>
<dbReference type="Araport" id="AT3G43440"/>
<dbReference type="TAIR" id="AT3G43440">
    <property type="gene designation" value="JAZ11"/>
</dbReference>
<dbReference type="HOGENOM" id="CLU_088770_2_0_1"/>
<dbReference type="InParanoid" id="Q9M246"/>
<dbReference type="PhylomeDB" id="Q9M246"/>
<dbReference type="PRO" id="PR:Q9M246"/>
<dbReference type="Proteomes" id="UP000006548">
    <property type="component" value="Chromosome 3"/>
</dbReference>
<dbReference type="ExpressionAtlas" id="Q9M246">
    <property type="expression patterns" value="baseline and differential"/>
</dbReference>
<dbReference type="GO" id="GO:0005634">
    <property type="term" value="C:nucleus"/>
    <property type="evidence" value="ECO:0007669"/>
    <property type="project" value="UniProtKB-SubCell"/>
</dbReference>
<dbReference type="GO" id="GO:0006952">
    <property type="term" value="P:defense response"/>
    <property type="evidence" value="ECO:0007669"/>
    <property type="project" value="UniProtKB-KW"/>
</dbReference>
<dbReference type="InterPro" id="IPR018467">
    <property type="entry name" value="CCT_CS"/>
</dbReference>
<dbReference type="InterPro" id="IPR040390">
    <property type="entry name" value="TIFY/JAZ"/>
</dbReference>
<dbReference type="InterPro" id="IPR010399">
    <property type="entry name" value="Tify_dom"/>
</dbReference>
<dbReference type="PANTHER" id="PTHR33077:SF61">
    <property type="entry name" value="PROTEIN TIFY 3A-RELATED"/>
    <property type="match status" value="1"/>
</dbReference>
<dbReference type="PANTHER" id="PTHR33077">
    <property type="entry name" value="PROTEIN TIFY 4A-RELATED-RELATED"/>
    <property type="match status" value="1"/>
</dbReference>
<dbReference type="Pfam" id="PF09425">
    <property type="entry name" value="Jas_motif"/>
    <property type="match status" value="2"/>
</dbReference>
<dbReference type="Pfam" id="PF06200">
    <property type="entry name" value="tify"/>
    <property type="match status" value="2"/>
</dbReference>
<dbReference type="SMART" id="SM00979">
    <property type="entry name" value="TIFY"/>
    <property type="match status" value="2"/>
</dbReference>
<dbReference type="PROSITE" id="PS51320">
    <property type="entry name" value="TIFY"/>
    <property type="match status" value="2"/>
</dbReference>
<feature type="chain" id="PRO_0000300641" description="Protein TIFY 3A">
    <location>
        <begin position="1"/>
        <end position="238"/>
    </location>
</feature>
<feature type="domain" description="Tify 1" evidence="3">
    <location>
        <begin position="39"/>
        <end position="74"/>
    </location>
</feature>
<feature type="domain" description="Tify 2" evidence="3">
    <location>
        <begin position="125"/>
        <end position="160"/>
    </location>
</feature>
<feature type="region of interest" description="Disordered" evidence="5">
    <location>
        <begin position="219"/>
        <end position="238"/>
    </location>
</feature>
<feature type="short sequence motif" description="Jas 1" evidence="2">
    <location>
        <begin position="101"/>
        <end position="120"/>
    </location>
</feature>
<feature type="short sequence motif" description="Nuclear localization signal 1" evidence="4">
    <location>
        <begin position="103"/>
        <end position="110"/>
    </location>
</feature>
<feature type="short sequence motif" description="Jas 2" evidence="2">
    <location>
        <begin position="197"/>
        <end position="222"/>
    </location>
</feature>
<feature type="short sequence motif" description="Nuclear localization signal 2" evidence="4">
    <location>
        <begin position="199"/>
        <end position="206"/>
    </location>
</feature>
<reference key="1">
    <citation type="journal article" date="2000" name="Nature">
        <title>Sequence and analysis of chromosome 3 of the plant Arabidopsis thaliana.</title>
        <authorList>
            <person name="Salanoubat M."/>
            <person name="Lemcke K."/>
            <person name="Rieger M."/>
            <person name="Ansorge W."/>
            <person name="Unseld M."/>
            <person name="Fartmann B."/>
            <person name="Valle G."/>
            <person name="Bloecker H."/>
            <person name="Perez-Alonso M."/>
            <person name="Obermaier B."/>
            <person name="Delseny M."/>
            <person name="Boutry M."/>
            <person name="Grivell L.A."/>
            <person name="Mache R."/>
            <person name="Puigdomenech P."/>
            <person name="De Simone V."/>
            <person name="Choisne N."/>
            <person name="Artiguenave F."/>
            <person name="Robert C."/>
            <person name="Brottier P."/>
            <person name="Wincker P."/>
            <person name="Cattolico L."/>
            <person name="Weissenbach J."/>
            <person name="Saurin W."/>
            <person name="Quetier F."/>
            <person name="Schaefer M."/>
            <person name="Mueller-Auer S."/>
            <person name="Gabel C."/>
            <person name="Fuchs M."/>
            <person name="Benes V."/>
            <person name="Wurmbach E."/>
            <person name="Drzonek H."/>
            <person name="Erfle H."/>
            <person name="Jordan N."/>
            <person name="Bangert S."/>
            <person name="Wiedelmann R."/>
            <person name="Kranz H."/>
            <person name="Voss H."/>
            <person name="Holland R."/>
            <person name="Brandt P."/>
            <person name="Nyakatura G."/>
            <person name="Vezzi A."/>
            <person name="D'Angelo M."/>
            <person name="Pallavicini A."/>
            <person name="Toppo S."/>
            <person name="Simionati B."/>
            <person name="Conrad A."/>
            <person name="Hornischer K."/>
            <person name="Kauer G."/>
            <person name="Loehnert T.-H."/>
            <person name="Nordsiek G."/>
            <person name="Reichelt J."/>
            <person name="Scharfe M."/>
            <person name="Schoen O."/>
            <person name="Bargues M."/>
            <person name="Terol J."/>
            <person name="Climent J."/>
            <person name="Navarro P."/>
            <person name="Collado C."/>
            <person name="Perez-Perez A."/>
            <person name="Ottenwaelder B."/>
            <person name="Duchemin D."/>
            <person name="Cooke R."/>
            <person name="Laudie M."/>
            <person name="Berger-Llauro C."/>
            <person name="Purnelle B."/>
            <person name="Masuy D."/>
            <person name="de Haan M."/>
            <person name="Maarse A.C."/>
            <person name="Alcaraz J.-P."/>
            <person name="Cottet A."/>
            <person name="Casacuberta E."/>
            <person name="Monfort A."/>
            <person name="Argiriou A."/>
            <person name="Flores M."/>
            <person name="Liguori R."/>
            <person name="Vitale D."/>
            <person name="Mannhaupt G."/>
            <person name="Haase D."/>
            <person name="Schoof H."/>
            <person name="Rudd S."/>
            <person name="Zaccaria P."/>
            <person name="Mewes H.-W."/>
            <person name="Mayer K.F.X."/>
            <person name="Kaul S."/>
            <person name="Town C.D."/>
            <person name="Koo H.L."/>
            <person name="Tallon L.J."/>
            <person name="Jenkins J."/>
            <person name="Rooney T."/>
            <person name="Rizzo M."/>
            <person name="Walts A."/>
            <person name="Utterback T."/>
            <person name="Fujii C.Y."/>
            <person name="Shea T.P."/>
            <person name="Creasy T.H."/>
            <person name="Haas B."/>
            <person name="Maiti R."/>
            <person name="Wu D."/>
            <person name="Peterson J."/>
            <person name="Van Aken S."/>
            <person name="Pai G."/>
            <person name="Militscher J."/>
            <person name="Sellers P."/>
            <person name="Gill J.E."/>
            <person name="Feldblyum T.V."/>
            <person name="Preuss D."/>
            <person name="Lin X."/>
            <person name="Nierman W.C."/>
            <person name="Salzberg S.L."/>
            <person name="White O."/>
            <person name="Venter J.C."/>
            <person name="Fraser C.M."/>
            <person name="Kaneko T."/>
            <person name="Nakamura Y."/>
            <person name="Sato S."/>
            <person name="Kato T."/>
            <person name="Asamizu E."/>
            <person name="Sasamoto S."/>
            <person name="Kimura T."/>
            <person name="Idesawa K."/>
            <person name="Kawashima K."/>
            <person name="Kishida Y."/>
            <person name="Kiyokawa C."/>
            <person name="Kohara M."/>
            <person name="Matsumoto M."/>
            <person name="Matsuno A."/>
            <person name="Muraki A."/>
            <person name="Nakayama S."/>
            <person name="Nakazaki N."/>
            <person name="Shinpo S."/>
            <person name="Takeuchi C."/>
            <person name="Wada T."/>
            <person name="Watanabe A."/>
            <person name="Yamada M."/>
            <person name="Yasuda M."/>
            <person name="Tabata S."/>
        </authorList>
    </citation>
    <scope>NUCLEOTIDE SEQUENCE [LARGE SCALE GENOMIC DNA]</scope>
    <source>
        <strain>cv. Columbia</strain>
    </source>
</reference>
<reference key="2">
    <citation type="journal article" date="2017" name="Plant J.">
        <title>Araport11: a complete reannotation of the Arabidopsis thaliana reference genome.</title>
        <authorList>
            <person name="Cheng C.Y."/>
            <person name="Krishnakumar V."/>
            <person name="Chan A.P."/>
            <person name="Thibaud-Nissen F."/>
            <person name="Schobel S."/>
            <person name="Town C.D."/>
        </authorList>
    </citation>
    <scope>GENOME REANNOTATION</scope>
    <source>
        <strain>cv. Columbia</strain>
    </source>
</reference>
<reference key="3">
    <citation type="submission" date="2004-09" db="EMBL/GenBank/DDBJ databases">
        <title>Arabidopsis ORF clones.</title>
        <authorList>
            <person name="Cheuk R.F."/>
            <person name="Chen H."/>
            <person name="Kim C.J."/>
            <person name="Shinn P."/>
            <person name="Ecker J.R."/>
        </authorList>
    </citation>
    <scope>NUCLEOTIDE SEQUENCE [LARGE SCALE MRNA]</scope>
    <source>
        <strain>cv. Columbia</strain>
    </source>
</reference>
<reference key="4">
    <citation type="journal article" date="2007" name="Nature">
        <title>The JAZ family of repressors is the missing link in jasmonate signalling.</title>
        <authorList>
            <person name="Chini A."/>
            <person name="Fonseca S."/>
            <person name="Fernandez G."/>
            <person name="Adie B."/>
            <person name="Chico J.M."/>
            <person name="Lorenzo O."/>
            <person name="Garcia-Casado G."/>
            <person name="Lopez-Vidriero I."/>
            <person name="Lozano F.M."/>
            <person name="Ponce M.R."/>
            <person name="Micol J.L."/>
            <person name="Solano R."/>
        </authorList>
    </citation>
    <scope>GENE FAMILY</scope>
    <scope>NOMENCLATURE</scope>
</reference>
<reference key="5">
    <citation type="journal article" date="2007" name="Plant Cell">
        <title>A downstream mediator in the growth repression limb of the jasmonate pathway.</title>
        <authorList>
            <person name="Yan Y."/>
            <person name="Stolz S."/>
            <person name="Chetelat A."/>
            <person name="Reymond P."/>
            <person name="Pagni M."/>
            <person name="Dubugnon L."/>
            <person name="Farmer E.E."/>
        </authorList>
    </citation>
    <scope>DOMAIN</scope>
</reference>
<reference key="6">
    <citation type="journal article" date="2007" name="Trends Plant Sci.">
        <title>The tify family previously known as ZIM.</title>
        <authorList>
            <person name="Vanholme B."/>
            <person name="Grunewald W."/>
            <person name="Bateman A."/>
            <person name="Kohchi T."/>
            <person name="Gheysen G."/>
        </authorList>
    </citation>
    <scope>GENE FAMILY</scope>
    <scope>NOMENCLATURE</scope>
</reference>
<reference key="7">
    <citation type="journal article" date="2008" name="Plant Physiol.">
        <title>Regulation and function of Arabidopsis JASMONATE ZIM-domain genes in response to wounding and herbivory.</title>
        <authorList>
            <person name="Chung H.S."/>
            <person name="Koo A.J."/>
            <person name="Gao X."/>
            <person name="Jayanty S."/>
            <person name="Thines B."/>
            <person name="Jones A.D."/>
            <person name="Howe G.A."/>
        </authorList>
    </citation>
    <scope>INDUCTION BY WOUNDING AND HERBIVORY</scope>
</reference>
<reference key="8">
    <citation type="journal article" date="2009" name="Plant Cell">
        <title>A critical role for the TIFY motif in repression of jasmonate signaling by a stabilized splice variant of the JASMONATE ZIM-domain protein JAZ10 in Arabidopsis.</title>
        <authorList>
            <person name="Chung H.S."/>
            <person name="Howe G.A."/>
        </authorList>
    </citation>
    <scope>FUNCTION</scope>
    <scope>INTERACTION WITH TIFY10A/JAZ1; TIFY10B/JAZ2; TIFY6B/JAZ3; TIFY6A/JAZ4; TIFY7/JAZ9 AND TIFY9/JAZ10</scope>
</reference>
<reference key="9">
    <citation type="journal article" date="2009" name="Plant J.">
        <title>The ZIM domain mediates homo- and heteromeric interactions between Arabidopsis JAZ proteins.</title>
        <authorList>
            <person name="Chini A."/>
            <person name="Fonseca S."/>
            <person name="Chico J.M."/>
            <person name="Fernandez-Calvo P."/>
            <person name="Solano R."/>
        </authorList>
    </citation>
    <scope>INTERACTION WITH MYC2</scope>
</reference>
<reference key="10">
    <citation type="journal article" date="2010" name="Nature">
        <title>NINJA connects the co-repressor TOPLESS to jasmonate signalling.</title>
        <authorList>
            <person name="Pauwels L."/>
            <person name="Barbero G.F."/>
            <person name="Geerinck J."/>
            <person name="Tilleman S."/>
            <person name="Grunewald W."/>
            <person name="Perez A.C."/>
            <person name="Chico J.M."/>
            <person name="Bossche R.V."/>
            <person name="Sewell J."/>
            <person name="Gil E."/>
            <person name="Garcia-Casado G."/>
            <person name="Witters E."/>
            <person name="Inze D."/>
            <person name="Long J.A."/>
            <person name="De Jaeger G."/>
            <person name="Solano R."/>
            <person name="Goossens A."/>
        </authorList>
    </citation>
    <scope>INTERACTION WITH AFPH2/NINJA</scope>
</reference>
<reference key="11">
    <citation type="journal article" date="2011" name="Plant Cell">
        <title>The Arabidopsis bHLH transcription factors MYC3 and MYC4 are targets of JAZ repressors and act additively with MYC2 in the activation of jasmonate responses.</title>
        <authorList>
            <person name="Fernandez-Calvo P."/>
            <person name="Chini A."/>
            <person name="Fernandez-Barbero G."/>
            <person name="Chico J.M."/>
            <person name="Gimenez-Ibanez S."/>
            <person name="Geerinck J."/>
            <person name="Eeckhout D."/>
            <person name="Schweizer F."/>
            <person name="Godoy M."/>
            <person name="Franco-Zorrilla J.M."/>
            <person name="Pauwels L."/>
            <person name="Witters E."/>
            <person name="Puga M.I."/>
            <person name="Paz-Ares J."/>
            <person name="Goossens A."/>
            <person name="Reymond P."/>
            <person name="De Jaeger G."/>
            <person name="Solano R."/>
        </authorList>
    </citation>
    <scope>FUNCTION</scope>
    <scope>INTERACTION WITH MYC2 AND MYC4</scope>
    <scope>SUBUNIT</scope>
</reference>
<reference key="12">
    <citation type="journal article" date="2011" name="Plant Cell">
        <title>The Jasmonate-ZIM domain proteins interact with the R2R3-MYB transcription factors MYB21 and MYB24 to affect Jasmonate-regulated stamen development in Arabidopsis.</title>
        <authorList>
            <person name="Song S."/>
            <person name="Qi T."/>
            <person name="Huang H."/>
            <person name="Ren Q."/>
            <person name="Wu D."/>
            <person name="Chang C."/>
            <person name="Peng W."/>
            <person name="Liu Y."/>
            <person name="Peng J."/>
            <person name="Xie D."/>
        </authorList>
    </citation>
    <scope>INTERACTION WITH MYB21 AND MYB24</scope>
</reference>
<sequence>MAEVNGDFPVPSFADGTGSVSAGLDLLVERSIHEARSTEPDASTQLTIIFGGSCRVFNGVPAQKVQEIIRIAFAGKQTKNVTGINPALNRALSFSTVADLPIARRRSLQRFLEKRRDRSTKPDGSMILPSQLTIIFGGSFSVFDGIPAEKVQEILHIAAAAKATETINLTSINPALKRAISFSNASTVACVSTADVPIARRRSLQRFFEKRRHRFVHTKPYSATTSEADKNETSPIVT</sequence>
<comment type="function">
    <text evidence="7 10">Repressor of jasmonate (JA) responses. Targets MYC2, MYC3 and MYC4 that are JA-dependent transcription activators.</text>
</comment>
<comment type="subunit">
    <text evidence="7 8 9 10 11">Interacts with MYC2, MYB21, MYB24, AFPH2/NINJA, TIFY10A/JAZ1, TIFY10B/JAZ2, TIFY6B/JAZ3, TIFY6A/JAZ4, TIFY7/JAZ9 and TIFY9/JAZ10.</text>
</comment>
<comment type="interaction">
    <interactant intactId="EBI-2312209">
        <id>Q9M246</id>
    </interactant>
    <interactant intactId="EBI-4434261">
        <id>Q9LNJ5</id>
        <label>BHLH13</label>
    </interactant>
    <organismsDiffer>false</organismsDiffer>
    <experiments>5</experiments>
</comment>
<comment type="interaction">
    <interactant intactId="EBI-2312209">
        <id>Q9M246</id>
    </interactant>
    <interactant intactId="EBI-1792336">
        <id>Q39204</id>
        <label>MYC2</label>
    </interactant>
    <organismsDiffer>false</organismsDiffer>
    <experiments>5</experiments>
</comment>
<comment type="subcellular location">
    <subcellularLocation>
        <location evidence="4">Nucleus</location>
    </subcellularLocation>
</comment>
<comment type="alternative products">
    <event type="alternative splicing"/>
    <isoform>
        <id>Q9M246-1</id>
        <name>1</name>
        <sequence type="displayed"/>
    </isoform>
    <text>A number of isoforms are produced. According to EST sequences.</text>
</comment>
<comment type="induction">
    <text evidence="6">Up-regulated by wounding and herbivory.</text>
</comment>
<comment type="domain">
    <text evidence="1">The jas domains (101-120) and (197-222) are required for interaction with COI1.</text>
</comment>
<comment type="PTM">
    <text evidence="1">Ubiquitinated. Targeted for degradation by the SCF(COI1) E3 ubiquitin ligase-proteasome pathway during jasmonate signaling.</text>
</comment>
<comment type="similarity">
    <text evidence="12">Belongs to the TIFY/JAZ family.</text>
</comment>
<evidence type="ECO:0000250" key="1">
    <source>
        <dbReference type="UniProtKB" id="Q7XPM8"/>
    </source>
</evidence>
<evidence type="ECO:0000255" key="2"/>
<evidence type="ECO:0000255" key="3">
    <source>
        <dbReference type="PROSITE-ProRule" id="PRU00650"/>
    </source>
</evidence>
<evidence type="ECO:0000255" key="4">
    <source>
        <dbReference type="PROSITE-ProRule" id="PRU00768"/>
    </source>
</evidence>
<evidence type="ECO:0000256" key="5">
    <source>
        <dbReference type="SAM" id="MobiDB-lite"/>
    </source>
</evidence>
<evidence type="ECO:0000269" key="6">
    <source>
    </source>
</evidence>
<evidence type="ECO:0000269" key="7">
    <source>
    </source>
</evidence>
<evidence type="ECO:0000269" key="8">
    <source>
    </source>
</evidence>
<evidence type="ECO:0000269" key="9">
    <source>
    </source>
</evidence>
<evidence type="ECO:0000269" key="10">
    <source>
    </source>
</evidence>
<evidence type="ECO:0000269" key="11">
    <source>
    </source>
</evidence>
<evidence type="ECO:0000305" key="12"/>
<accession>Q9M246</accession>